<keyword id="KW-0137">Centromere</keyword>
<keyword id="KW-0158">Chromosome</keyword>
<keyword id="KW-0963">Cytoplasm</keyword>
<keyword id="KW-0206">Cytoskeleton</keyword>
<keyword id="KW-0378">Hydrolase</keyword>
<keyword id="KW-0464">Manganese</keyword>
<keyword id="KW-0479">Metal-binding</keyword>
<keyword id="KW-0488">Methylation</keyword>
<keyword id="KW-0539">Nucleus</keyword>
<keyword id="KW-0597">Phosphoprotein</keyword>
<keyword id="KW-0904">Protein phosphatase</keyword>
<keyword id="KW-1185">Reference proteome</keyword>
<keyword id="KW-0832">Ubl conjugation</keyword>
<dbReference type="EC" id="3.1.3.16" evidence="2"/>
<dbReference type="EMBL" id="Y00763">
    <property type="protein sequence ID" value="CAA68732.1"/>
    <property type="molecule type" value="mRNA"/>
</dbReference>
<dbReference type="PIR" id="S00220">
    <property type="entry name" value="PARB2B"/>
</dbReference>
<dbReference type="RefSeq" id="NP_001095177.1">
    <property type="nucleotide sequence ID" value="NM_001101707.1"/>
</dbReference>
<dbReference type="SMR" id="P11611"/>
<dbReference type="FunCoup" id="P11611">
    <property type="interactions" value="2118"/>
</dbReference>
<dbReference type="iPTMnet" id="P11611"/>
<dbReference type="PaxDb" id="9986-ENSOCUP00000004530"/>
<dbReference type="Ensembl" id="ENSOCUT00000045283.1">
    <property type="protein sequence ID" value="ENSOCUP00000045823.1"/>
    <property type="gene ID" value="ENSOCUG00000005230.4"/>
</dbReference>
<dbReference type="GeneID" id="100009300"/>
<dbReference type="KEGG" id="ocu:100009300"/>
<dbReference type="CTD" id="5516"/>
<dbReference type="eggNOG" id="KOG0371">
    <property type="taxonomic scope" value="Eukaryota"/>
</dbReference>
<dbReference type="GeneTree" id="ENSGT00550000074618"/>
<dbReference type="HOGENOM" id="CLU_004962_0_5_1"/>
<dbReference type="InParanoid" id="P11611"/>
<dbReference type="OMA" id="MDDKTFT"/>
<dbReference type="OrthoDB" id="1930084at2759"/>
<dbReference type="TreeFam" id="TF105559"/>
<dbReference type="Proteomes" id="UP000001811">
    <property type="component" value="Chromosome 2"/>
</dbReference>
<dbReference type="Bgee" id="ENSOCUG00000005230">
    <property type="expression patterns" value="Expressed in aorta and 15 other cell types or tissues"/>
</dbReference>
<dbReference type="GO" id="GO:0000775">
    <property type="term" value="C:chromosome, centromeric region"/>
    <property type="evidence" value="ECO:0007669"/>
    <property type="project" value="UniProtKB-SubCell"/>
</dbReference>
<dbReference type="GO" id="GO:0005737">
    <property type="term" value="C:cytoplasm"/>
    <property type="evidence" value="ECO:0007669"/>
    <property type="project" value="UniProtKB-SubCell"/>
</dbReference>
<dbReference type="GO" id="GO:0090443">
    <property type="term" value="C:FAR/SIN/STRIPAK complex"/>
    <property type="evidence" value="ECO:0000250"/>
    <property type="project" value="UniProtKB"/>
</dbReference>
<dbReference type="GO" id="GO:0005634">
    <property type="term" value="C:nucleus"/>
    <property type="evidence" value="ECO:0007669"/>
    <property type="project" value="UniProtKB-SubCell"/>
</dbReference>
<dbReference type="GO" id="GO:0000922">
    <property type="term" value="C:spindle pole"/>
    <property type="evidence" value="ECO:0007669"/>
    <property type="project" value="UniProtKB-SubCell"/>
</dbReference>
<dbReference type="GO" id="GO:0046872">
    <property type="term" value="F:metal ion binding"/>
    <property type="evidence" value="ECO:0007669"/>
    <property type="project" value="UniProtKB-KW"/>
</dbReference>
<dbReference type="GO" id="GO:0004722">
    <property type="term" value="F:protein serine/threonine phosphatase activity"/>
    <property type="evidence" value="ECO:0007669"/>
    <property type="project" value="UniProtKB-EC"/>
</dbReference>
<dbReference type="CDD" id="cd07415">
    <property type="entry name" value="MPP_PP2A_PP4_PP6"/>
    <property type="match status" value="1"/>
</dbReference>
<dbReference type="FunFam" id="3.60.21.10:FF:000003">
    <property type="entry name" value="Serine/threonine-protein phosphatase"/>
    <property type="match status" value="1"/>
</dbReference>
<dbReference type="Gene3D" id="3.60.21.10">
    <property type="match status" value="1"/>
</dbReference>
<dbReference type="InterPro" id="IPR004843">
    <property type="entry name" value="Calcineurin-like_PHP_ApaH"/>
</dbReference>
<dbReference type="InterPro" id="IPR029052">
    <property type="entry name" value="Metallo-depent_PP-like"/>
</dbReference>
<dbReference type="InterPro" id="IPR047129">
    <property type="entry name" value="PPA2-like"/>
</dbReference>
<dbReference type="InterPro" id="IPR006186">
    <property type="entry name" value="Ser/Thr-sp_prot-phosphatase"/>
</dbReference>
<dbReference type="PANTHER" id="PTHR45619">
    <property type="entry name" value="SERINE/THREONINE-PROTEIN PHOSPHATASE PP2A-RELATED"/>
    <property type="match status" value="1"/>
</dbReference>
<dbReference type="Pfam" id="PF00149">
    <property type="entry name" value="Metallophos"/>
    <property type="match status" value="1"/>
</dbReference>
<dbReference type="PRINTS" id="PR00114">
    <property type="entry name" value="STPHPHTASE"/>
</dbReference>
<dbReference type="SMART" id="SM00156">
    <property type="entry name" value="PP2Ac"/>
    <property type="match status" value="1"/>
</dbReference>
<dbReference type="SUPFAM" id="SSF56300">
    <property type="entry name" value="Metallo-dependent phosphatases"/>
    <property type="match status" value="1"/>
</dbReference>
<dbReference type="PROSITE" id="PS00125">
    <property type="entry name" value="SER_THR_PHOSPHATASE"/>
    <property type="match status" value="1"/>
</dbReference>
<comment type="function">
    <text evidence="2">Catalytic subunit of protein phosphatase 2A (PP2A), a serine/threonine phosphatase involved in the regulation of a wide variety of enzymes, signal transduction pathways, and cellular events. PP2A can modulate the activity of phosphorylase B kinase, casein kinase 2, mitogen-stimulated S6 kinase, and MAP-2 kinase. Part of the striatin-interacting phosphatase and kinase (STRIPAK) complexes. STRIPAK complexes have critical roles in protein (de)phosphorylation and are regulators of multiple signaling pathways including Hippo, MAPK, nuclear receptor and cytoskeleton remodeling. Different types of STRIPAK complexes are involved in a variety of biological processes such as cell growth, differentiation, apoptosis, metabolism and immune regulation.</text>
</comment>
<comment type="catalytic activity">
    <reaction evidence="2">
        <text>O-phospho-L-seryl-[protein] + H2O = L-seryl-[protein] + phosphate</text>
        <dbReference type="Rhea" id="RHEA:20629"/>
        <dbReference type="Rhea" id="RHEA-COMP:9863"/>
        <dbReference type="Rhea" id="RHEA-COMP:11604"/>
        <dbReference type="ChEBI" id="CHEBI:15377"/>
        <dbReference type="ChEBI" id="CHEBI:29999"/>
        <dbReference type="ChEBI" id="CHEBI:43474"/>
        <dbReference type="ChEBI" id="CHEBI:83421"/>
        <dbReference type="EC" id="3.1.3.16"/>
    </reaction>
    <physiologicalReaction direction="left-to-right" evidence="2">
        <dbReference type="Rhea" id="RHEA:20630"/>
    </physiologicalReaction>
</comment>
<comment type="catalytic activity">
    <reaction evidence="2">
        <text>O-phospho-L-threonyl-[protein] + H2O = L-threonyl-[protein] + phosphate</text>
        <dbReference type="Rhea" id="RHEA:47004"/>
        <dbReference type="Rhea" id="RHEA-COMP:11060"/>
        <dbReference type="Rhea" id="RHEA-COMP:11605"/>
        <dbReference type="ChEBI" id="CHEBI:15377"/>
        <dbReference type="ChEBI" id="CHEBI:30013"/>
        <dbReference type="ChEBI" id="CHEBI:43474"/>
        <dbReference type="ChEBI" id="CHEBI:61977"/>
        <dbReference type="EC" id="3.1.3.16"/>
    </reaction>
    <physiologicalReaction direction="left-to-right" evidence="2">
        <dbReference type="Rhea" id="RHEA:47005"/>
    </physiologicalReaction>
</comment>
<comment type="cofactor">
    <cofactor evidence="1">
        <name>Mn(2+)</name>
        <dbReference type="ChEBI" id="CHEBI:29035"/>
    </cofactor>
    <text evidence="1">Binds 2 manganese ions per subunit.</text>
</comment>
<comment type="subunit">
    <text evidence="2 4">Found in a complex with at least ARL2, PPP2CB, PPP2R1A, PPP2R2A, PPP2R5E and TBCD. Interacts with TBCD (By similarity). PP2A consists of a common heterodimeric core enzyme (composed of a 36 kDa catalytic subunit (subunit C) and a 65 kDa constant regulatory subunit (PR65) (subunit A)) that associates with a variety of regulatory subunits. Proteins that associate with the core dimer include three families of regulatory subunits B (the R2/B/PR55/B55, R3/B''/PR72/PR130/PR59 and R5/B'/B56 families), the 48 kDa variable regulatory subunit, viral proteins, and cell signaling molecules. Binds PPME1. May indirectly interact with SGO1, most probably through regulatory B56 subunits. Interacts with CTTNBP2NL. Interacts with PTPA (By similarity). Part of the core of STRIPAK complexes composed of PP2A catalytic and scaffolding subunits, the striatins (PP2A regulatory subunits), the striatin-associated proteins MOB4, STRIP1 and STRIP2, PDCD10 and members of the STE20 kinases, such as STK24 and STK26 (By similarity).</text>
</comment>
<comment type="subcellular location">
    <subcellularLocation>
        <location evidence="2">Cytoplasm</location>
    </subcellularLocation>
    <subcellularLocation>
        <location evidence="2">Nucleus</location>
    </subcellularLocation>
    <subcellularLocation>
        <location evidence="2">Chromosome</location>
        <location evidence="2">Centromere</location>
    </subcellularLocation>
    <subcellularLocation>
        <location evidence="2">Cytoplasm</location>
        <location evidence="2">Cytoskeleton</location>
        <location evidence="2">Spindle pole</location>
    </subcellularLocation>
    <text evidence="2">In prometaphase cells, but not in anaphase cells, localizes at centromeres. During mitosis, also found at spindle poles.</text>
</comment>
<comment type="PTM">
    <text evidence="1">Reversibly methyl esterified on Leu-309 by leucine carboxyl methyltransferase 1 (Lcmt1) and protein phosphatase methylesterase 1 (PPME1). Carboxyl methylation influences the affinity of the catalytic subunit for the different regulatory subunits, thereby modulating the PP2A holoenzyme's substrate specificity, enzyme activity and cellular localization (By similarity).</text>
</comment>
<comment type="PTM">
    <text evidence="1">Phosphorylation of either threonine (by autophosphorylation-activated protein kinase) or tyrosine results in inactivation of the phosphatase. Auto-dephosphorylation has been suggested as a mechanism for reactivation (By similarity).</text>
</comment>
<comment type="PTM">
    <text evidence="3">May be monoubiquitinated by NOSIP.</text>
</comment>
<comment type="similarity">
    <text evidence="6">Belongs to the PPP phosphatase family. PP-1 subfamily.</text>
</comment>
<gene>
    <name type="primary">PPP2CB</name>
</gene>
<protein>
    <recommendedName>
        <fullName>Serine/threonine-protein phosphatase 2A catalytic subunit beta isoform</fullName>
        <shortName>PP2A-beta</shortName>
        <ecNumber evidence="2">3.1.3.16</ecNumber>
    </recommendedName>
</protein>
<sequence length="309" mass="35605">MDDKTFTKELDQWVEQLNECKQLNENQVRTLCEKAKEILTKESNVQEVRCPVTVCGDVHGQFHDLMELFRIGGKSPDTNYLFMGDYVDRGYYSVETVTLLVALKVRYPERITILRGNHESRQITQVYGFYDECLRKYGNANVWKYFTDLFDYLPLTALVDGQIFCLHGGLSPSIDTLDHIRALDRLQEVPHEGPMCDLLWSDPDDRGGWGISPRGAGYTFGQDISETFNHANGLTLVSRAHQLVMEGYNWCHDRNVVTIFSAPNYCYRCGNQAAIMELDDTLKYSFLQFDPAPRRGEPHVTRRTPDYFL</sequence>
<evidence type="ECO:0000250" key="1"/>
<evidence type="ECO:0000250" key="2">
    <source>
        <dbReference type="UniProtKB" id="P62714"/>
    </source>
</evidence>
<evidence type="ECO:0000250" key="3">
    <source>
        <dbReference type="UniProtKB" id="P62715"/>
    </source>
</evidence>
<evidence type="ECO:0000250" key="4">
    <source>
        <dbReference type="UniProtKB" id="Q0P594"/>
    </source>
</evidence>
<evidence type="ECO:0000269" key="5">
    <source>
    </source>
</evidence>
<evidence type="ECO:0000305" key="6"/>
<accession>P11611</accession>
<proteinExistence type="evidence at protein level"/>
<organism>
    <name type="scientific">Oryctolagus cuniculus</name>
    <name type="common">Rabbit</name>
    <dbReference type="NCBI Taxonomy" id="9986"/>
    <lineage>
        <taxon>Eukaryota</taxon>
        <taxon>Metazoa</taxon>
        <taxon>Chordata</taxon>
        <taxon>Craniata</taxon>
        <taxon>Vertebrata</taxon>
        <taxon>Euteleostomi</taxon>
        <taxon>Mammalia</taxon>
        <taxon>Eutheria</taxon>
        <taxon>Euarchontoglires</taxon>
        <taxon>Glires</taxon>
        <taxon>Lagomorpha</taxon>
        <taxon>Leporidae</taxon>
        <taxon>Oryctolagus</taxon>
    </lineage>
</organism>
<name>PP2AB_RABIT</name>
<reference key="1">
    <citation type="journal article" date="1987" name="FEBS Lett.">
        <title>A second catalytic subunit of type-2A protein phosphatase from rabbit skeletal muscle.</title>
        <authorList>
            <person name="da Cruz e Silva O.B."/>
            <person name="Cohen P.T.W."/>
        </authorList>
    </citation>
    <scope>NUCLEOTIDE SEQUENCE [MRNA]</scope>
    <source>
        <strain>New Zealand white</strain>
        <tissue>Skeletal muscle</tissue>
    </source>
</reference>
<reference key="2">
    <citation type="journal article" date="1992" name="Science">
        <title>Regulation of protein serine-threonine phosphatase type-2A by tyrosine phosphorylation.</title>
        <authorList>
            <person name="Chen J."/>
            <person name="Martin B.L."/>
            <person name="Brautigan D.L."/>
        </authorList>
    </citation>
    <scope>PHOSPHORYLATION AT TYR-307</scope>
</reference>
<feature type="chain" id="PRO_0000058848" description="Serine/threonine-protein phosphatase 2A catalytic subunit beta isoform">
    <location>
        <begin position="1"/>
        <end position="309"/>
    </location>
</feature>
<feature type="active site" description="Proton donor" evidence="1">
    <location>
        <position position="118"/>
    </location>
</feature>
<feature type="binding site" evidence="1">
    <location>
        <position position="57"/>
    </location>
    <ligand>
        <name>Mn(2+)</name>
        <dbReference type="ChEBI" id="CHEBI:29035"/>
        <label>1</label>
    </ligand>
</feature>
<feature type="binding site" evidence="1">
    <location>
        <position position="59"/>
    </location>
    <ligand>
        <name>Mn(2+)</name>
        <dbReference type="ChEBI" id="CHEBI:29035"/>
        <label>1</label>
    </ligand>
</feature>
<feature type="binding site" evidence="1">
    <location>
        <position position="85"/>
    </location>
    <ligand>
        <name>Mn(2+)</name>
        <dbReference type="ChEBI" id="CHEBI:29035"/>
        <label>1</label>
    </ligand>
</feature>
<feature type="binding site" evidence="1">
    <location>
        <position position="85"/>
    </location>
    <ligand>
        <name>Mn(2+)</name>
        <dbReference type="ChEBI" id="CHEBI:29035"/>
        <label>2</label>
    </ligand>
</feature>
<feature type="binding site" evidence="1">
    <location>
        <position position="117"/>
    </location>
    <ligand>
        <name>Mn(2+)</name>
        <dbReference type="ChEBI" id="CHEBI:29035"/>
        <label>2</label>
    </ligand>
</feature>
<feature type="binding site" evidence="1">
    <location>
        <position position="167"/>
    </location>
    <ligand>
        <name>Mn(2+)</name>
        <dbReference type="ChEBI" id="CHEBI:29035"/>
        <label>2</label>
    </ligand>
</feature>
<feature type="binding site" evidence="1">
    <location>
        <position position="241"/>
    </location>
    <ligand>
        <name>Mn(2+)</name>
        <dbReference type="ChEBI" id="CHEBI:29035"/>
        <label>2</label>
    </ligand>
</feature>
<feature type="modified residue" description="Phosphotyrosine" evidence="5">
    <location>
        <position position="307"/>
    </location>
</feature>
<feature type="modified residue" description="Leucine methyl ester" evidence="2">
    <location>
        <position position="309"/>
    </location>
</feature>